<evidence type="ECO:0000255" key="1">
    <source>
        <dbReference type="HAMAP-Rule" id="MF_00530"/>
    </source>
</evidence>
<protein>
    <recommendedName>
        <fullName evidence="1">ATP synthase epsilon chain</fullName>
    </recommendedName>
    <alternativeName>
        <fullName evidence="1">ATP synthase F1 sector epsilon subunit</fullName>
    </alternativeName>
    <alternativeName>
        <fullName evidence="1">F-ATPase epsilon subunit</fullName>
    </alternativeName>
</protein>
<feature type="chain" id="PRO_1000127822" description="ATP synthase epsilon chain">
    <location>
        <begin position="1"/>
        <end position="134"/>
    </location>
</feature>
<keyword id="KW-0066">ATP synthesis</keyword>
<keyword id="KW-1003">Cell membrane</keyword>
<keyword id="KW-0139">CF(1)</keyword>
<keyword id="KW-0375">Hydrogen ion transport</keyword>
<keyword id="KW-0406">Ion transport</keyword>
<keyword id="KW-0472">Membrane</keyword>
<keyword id="KW-0813">Transport</keyword>
<dbReference type="EMBL" id="CP000922">
    <property type="protein sequence ID" value="ACJ35054.1"/>
    <property type="molecule type" value="Genomic_DNA"/>
</dbReference>
<dbReference type="RefSeq" id="WP_012576183.1">
    <property type="nucleotide sequence ID" value="NC_011567.1"/>
</dbReference>
<dbReference type="SMR" id="B7GMF2"/>
<dbReference type="STRING" id="491915.Aflv_2701"/>
<dbReference type="GeneID" id="7038974"/>
<dbReference type="KEGG" id="afl:Aflv_2701"/>
<dbReference type="PATRIC" id="fig|491915.6.peg.2784"/>
<dbReference type="eggNOG" id="COG0355">
    <property type="taxonomic scope" value="Bacteria"/>
</dbReference>
<dbReference type="HOGENOM" id="CLU_084338_1_3_9"/>
<dbReference type="Proteomes" id="UP000000742">
    <property type="component" value="Chromosome"/>
</dbReference>
<dbReference type="GO" id="GO:0005886">
    <property type="term" value="C:plasma membrane"/>
    <property type="evidence" value="ECO:0007669"/>
    <property type="project" value="UniProtKB-SubCell"/>
</dbReference>
<dbReference type="GO" id="GO:0045259">
    <property type="term" value="C:proton-transporting ATP synthase complex"/>
    <property type="evidence" value="ECO:0007669"/>
    <property type="project" value="UniProtKB-KW"/>
</dbReference>
<dbReference type="GO" id="GO:0005524">
    <property type="term" value="F:ATP binding"/>
    <property type="evidence" value="ECO:0007669"/>
    <property type="project" value="UniProtKB-UniRule"/>
</dbReference>
<dbReference type="GO" id="GO:0046933">
    <property type="term" value="F:proton-transporting ATP synthase activity, rotational mechanism"/>
    <property type="evidence" value="ECO:0007669"/>
    <property type="project" value="UniProtKB-UniRule"/>
</dbReference>
<dbReference type="CDD" id="cd12152">
    <property type="entry name" value="F1-ATPase_delta"/>
    <property type="match status" value="1"/>
</dbReference>
<dbReference type="FunFam" id="1.20.5.440:FF:000001">
    <property type="entry name" value="ATP synthase epsilon chain"/>
    <property type="match status" value="1"/>
</dbReference>
<dbReference type="FunFam" id="2.60.15.10:FF:000001">
    <property type="entry name" value="ATP synthase epsilon chain"/>
    <property type="match status" value="1"/>
</dbReference>
<dbReference type="Gene3D" id="1.20.5.440">
    <property type="entry name" value="ATP synthase delta/epsilon subunit, C-terminal domain"/>
    <property type="match status" value="1"/>
</dbReference>
<dbReference type="Gene3D" id="2.60.15.10">
    <property type="entry name" value="F0F1 ATP synthase delta/epsilon subunit, N-terminal"/>
    <property type="match status" value="1"/>
</dbReference>
<dbReference type="HAMAP" id="MF_00530">
    <property type="entry name" value="ATP_synth_epsil_bac"/>
    <property type="match status" value="1"/>
</dbReference>
<dbReference type="InterPro" id="IPR036794">
    <property type="entry name" value="ATP_F1_dsu/esu_C_sf"/>
</dbReference>
<dbReference type="InterPro" id="IPR001469">
    <property type="entry name" value="ATP_synth_F1_dsu/esu"/>
</dbReference>
<dbReference type="InterPro" id="IPR020546">
    <property type="entry name" value="ATP_synth_F1_dsu/esu_N"/>
</dbReference>
<dbReference type="InterPro" id="IPR020547">
    <property type="entry name" value="ATP_synth_F1_esu_C"/>
</dbReference>
<dbReference type="InterPro" id="IPR036771">
    <property type="entry name" value="ATPsynth_dsu/esu_N"/>
</dbReference>
<dbReference type="NCBIfam" id="TIGR01216">
    <property type="entry name" value="ATP_synt_epsi"/>
    <property type="match status" value="1"/>
</dbReference>
<dbReference type="NCBIfam" id="NF001846">
    <property type="entry name" value="PRK00571.1-3"/>
    <property type="match status" value="1"/>
</dbReference>
<dbReference type="NCBIfam" id="NF009980">
    <property type="entry name" value="PRK13446.1"/>
    <property type="match status" value="1"/>
</dbReference>
<dbReference type="PANTHER" id="PTHR13822">
    <property type="entry name" value="ATP SYNTHASE DELTA/EPSILON CHAIN"/>
    <property type="match status" value="1"/>
</dbReference>
<dbReference type="PANTHER" id="PTHR13822:SF10">
    <property type="entry name" value="ATP SYNTHASE EPSILON CHAIN, CHLOROPLASTIC"/>
    <property type="match status" value="1"/>
</dbReference>
<dbReference type="Pfam" id="PF00401">
    <property type="entry name" value="ATP-synt_DE"/>
    <property type="match status" value="1"/>
</dbReference>
<dbReference type="Pfam" id="PF02823">
    <property type="entry name" value="ATP-synt_DE_N"/>
    <property type="match status" value="1"/>
</dbReference>
<dbReference type="SUPFAM" id="SSF46604">
    <property type="entry name" value="Epsilon subunit of F1F0-ATP synthase C-terminal domain"/>
    <property type="match status" value="1"/>
</dbReference>
<dbReference type="SUPFAM" id="SSF51344">
    <property type="entry name" value="Epsilon subunit of F1F0-ATP synthase N-terminal domain"/>
    <property type="match status" value="1"/>
</dbReference>
<organism>
    <name type="scientific">Anoxybacillus flavithermus (strain DSM 21510 / WK1)</name>
    <dbReference type="NCBI Taxonomy" id="491915"/>
    <lineage>
        <taxon>Bacteria</taxon>
        <taxon>Bacillati</taxon>
        <taxon>Bacillota</taxon>
        <taxon>Bacilli</taxon>
        <taxon>Bacillales</taxon>
        <taxon>Anoxybacillaceae</taxon>
        <taxon>Anoxybacillus</taxon>
    </lineage>
</organism>
<gene>
    <name evidence="1" type="primary">atpC</name>
    <name type="ordered locus">Aflv_2701</name>
</gene>
<reference key="1">
    <citation type="journal article" date="2008" name="Genome Biol.">
        <title>Encapsulated in silica: genome, proteome and physiology of the thermophilic bacterium Anoxybacillus flavithermus WK1.</title>
        <authorList>
            <person name="Saw J.H."/>
            <person name="Mountain B.W."/>
            <person name="Feng L."/>
            <person name="Omelchenko M.V."/>
            <person name="Hou S."/>
            <person name="Saito J.A."/>
            <person name="Stott M.B."/>
            <person name="Li D."/>
            <person name="Zhao G."/>
            <person name="Wu J."/>
            <person name="Galperin M.Y."/>
            <person name="Koonin E.V."/>
            <person name="Makarova K.S."/>
            <person name="Wolf Y.I."/>
            <person name="Rigden D.J."/>
            <person name="Dunfield P.F."/>
            <person name="Wang L."/>
            <person name="Alam M."/>
        </authorList>
    </citation>
    <scope>NUCLEOTIDE SEQUENCE [LARGE SCALE GENOMIC DNA]</scope>
    <source>
        <strain>DSM 21510 / WK1</strain>
    </source>
</reference>
<comment type="function">
    <text evidence="1">Produces ATP from ADP in the presence of a proton gradient across the membrane.</text>
</comment>
<comment type="subunit">
    <text evidence="1">F-type ATPases have 2 components, CF(1) - the catalytic core - and CF(0) - the membrane proton channel. CF(1) has five subunits: alpha(3), beta(3), gamma(1), delta(1), epsilon(1). CF(0) has three main subunits: a, b and c.</text>
</comment>
<comment type="subcellular location">
    <subcellularLocation>
        <location evidence="1">Cell membrane</location>
        <topology evidence="1">Peripheral membrane protein</topology>
    </subcellularLocation>
</comment>
<comment type="similarity">
    <text evidence="1">Belongs to the ATPase epsilon chain family.</text>
</comment>
<sequence length="134" mass="14574">MKTIKVSVVTPDGPVYEADVEMVSAKAQSGELGVLPGHIPMVAPLEIGAVRLKKGNATELVAVSGGFLEVRPDRVTILAQAAERAEDIDVARAKAAKERAERRLQAKQEDIDHKRAELALRRAINRLNVANRNF</sequence>
<accession>B7GMF2</accession>
<proteinExistence type="inferred from homology"/>
<name>ATPE_ANOFW</name>